<feature type="chain" id="PRO_0000210720" description="Putative MgpC-like protein MPN_149">
    <location>
        <begin position="1"/>
        <end position="434"/>
    </location>
</feature>
<feature type="region of interest" description="Disordered" evidence="1">
    <location>
        <begin position="168"/>
        <end position="193"/>
    </location>
</feature>
<feature type="region of interest" description="Disordered" evidence="1">
    <location>
        <begin position="215"/>
        <end position="267"/>
    </location>
</feature>
<feature type="compositionally biased region" description="Polar residues" evidence="1">
    <location>
        <begin position="170"/>
        <end position="184"/>
    </location>
</feature>
<feature type="compositionally biased region" description="Basic and acidic residues" evidence="1">
    <location>
        <begin position="218"/>
        <end position="229"/>
    </location>
</feature>
<feature type="compositionally biased region" description="Polar residues" evidence="1">
    <location>
        <begin position="248"/>
        <end position="267"/>
    </location>
</feature>
<gene>
    <name type="ordered locus">MPN_149</name>
    <name type="ORF">E07_orf434</name>
    <name type="ORF">MP005</name>
</gene>
<accession>P75037</accession>
<comment type="similarity">
    <text evidence="2">Belongs to the MgpC family.</text>
</comment>
<comment type="caution">
    <text evidence="2">Could be the product of a pseudogene.</text>
</comment>
<proteinExistence type="uncertain"/>
<reference key="1">
    <citation type="journal article" date="1996" name="Nucleic Acids Res.">
        <title>Complete sequence analysis of the genome of the bacterium Mycoplasma pneumoniae.</title>
        <authorList>
            <person name="Himmelreich R."/>
            <person name="Hilbert H."/>
            <person name="Plagens H."/>
            <person name="Pirkl E."/>
            <person name="Li B.-C."/>
            <person name="Herrmann R."/>
        </authorList>
    </citation>
    <scope>NUCLEOTIDE SEQUENCE [LARGE SCALE GENOMIC DNA]</scope>
    <source>
        <strain>ATCC 29342 / M129 / Subtype 1</strain>
    </source>
</reference>
<protein>
    <recommendedName>
        <fullName>Putative MgpC-like protein MPN_149</fullName>
    </recommendedName>
</protein>
<name>Y149_MYCPN</name>
<evidence type="ECO:0000256" key="1">
    <source>
        <dbReference type="SAM" id="MobiDB-lite"/>
    </source>
</evidence>
<evidence type="ECO:0000305" key="2"/>
<organism>
    <name type="scientific">Mycoplasma pneumoniae (strain ATCC 29342 / M129 / Subtype 1)</name>
    <name type="common">Mycoplasmoides pneumoniae</name>
    <dbReference type="NCBI Taxonomy" id="272634"/>
    <lineage>
        <taxon>Bacteria</taxon>
        <taxon>Bacillati</taxon>
        <taxon>Mycoplasmatota</taxon>
        <taxon>Mycoplasmoidales</taxon>
        <taxon>Mycoplasmoidaceae</taxon>
        <taxon>Mycoplasmoides</taxon>
    </lineage>
</organism>
<dbReference type="EMBL" id="U00089">
    <property type="protein sequence ID" value="AAB95653.1"/>
    <property type="molecule type" value="Genomic_DNA"/>
</dbReference>
<dbReference type="PIR" id="S73331">
    <property type="entry name" value="S73331"/>
</dbReference>
<dbReference type="RefSeq" id="NP_109837.1">
    <property type="nucleotide sequence ID" value="NC_000912.1"/>
</dbReference>
<dbReference type="RefSeq" id="WP_010874506.1">
    <property type="nucleotide sequence ID" value="NZ_OU342337.1"/>
</dbReference>
<dbReference type="SMR" id="P75037"/>
<dbReference type="EnsemblBacteria" id="AAB95653">
    <property type="protein sequence ID" value="AAB95653"/>
    <property type="gene ID" value="MPN_149"/>
</dbReference>
<dbReference type="KEGG" id="mpn:MPN_149"/>
<dbReference type="PATRIC" id="fig|272634.6.peg.165"/>
<dbReference type="HOGENOM" id="CLU_631379_0_0_14"/>
<dbReference type="OrthoDB" id="403681at2"/>
<dbReference type="BioCyc" id="MPNE272634:G1GJ3-250-MONOMER"/>
<dbReference type="Proteomes" id="UP000000808">
    <property type="component" value="Chromosome"/>
</dbReference>
<sequence length="434" mass="47970">MAVGIFILSLNPSYELVDWKRVGDTKLVALVRSALVRVKFNDGTSSDSNNQDTNQNALSFDTQESQKALNGSQSGSSDTSGSNSQDFASYILIFQAAPRATWVFERKIKLELPYVKNESGAGDSTTTNSGSLYTTLQDLLVEQPVTPYTPNAGLARVNGAAQDTVHFGSGQESSWNSQRSQKVLKNNPGPKAVTGFKLDKGRAYRKLNEAWPVYEPLDSTKDGKGKDESSWNSSEKTTAESDAPLVGSTGSQMAAVTDSQQSGDNNGLVSLAQRSTTVAVQKSDSSGSQGQGTTDNKFQKYLNTTQALHQMGVIVPSLETWAGENKYWNRYPCCWWCFSPSSDPAIVFHKWRSTECNHPVIPYFNRPTRLLKWPDRCDGFERGTEFVVLGRGWANHVRKGYLMSPHRVELGHRQAEGVCGESAWFQWNQRHRLA</sequence>
<keyword id="KW-1185">Reference proteome</keyword>